<dbReference type="EC" id="2.7.1.50" evidence="1"/>
<dbReference type="EMBL" id="AE016877">
    <property type="protein sequence ID" value="AAP07459.1"/>
    <property type="molecule type" value="Genomic_DNA"/>
</dbReference>
<dbReference type="RefSeq" id="NP_830258.1">
    <property type="nucleotide sequence ID" value="NC_004722.1"/>
</dbReference>
<dbReference type="RefSeq" id="WP_001056115.1">
    <property type="nucleotide sequence ID" value="NZ_CP138336.1"/>
</dbReference>
<dbReference type="SMR" id="Q81IG9"/>
<dbReference type="STRING" id="226900.BC_0419"/>
<dbReference type="KEGG" id="bce:BC0419"/>
<dbReference type="PATRIC" id="fig|226900.8.peg.388"/>
<dbReference type="HOGENOM" id="CLU_019943_0_1_9"/>
<dbReference type="OrthoDB" id="9778146at2"/>
<dbReference type="UniPathway" id="UPA00060">
    <property type="reaction ID" value="UER00139"/>
</dbReference>
<dbReference type="Proteomes" id="UP000001417">
    <property type="component" value="Chromosome"/>
</dbReference>
<dbReference type="GO" id="GO:0005524">
    <property type="term" value="F:ATP binding"/>
    <property type="evidence" value="ECO:0007669"/>
    <property type="project" value="UniProtKB-UniRule"/>
</dbReference>
<dbReference type="GO" id="GO:0004417">
    <property type="term" value="F:hydroxyethylthiazole kinase activity"/>
    <property type="evidence" value="ECO:0007669"/>
    <property type="project" value="UniProtKB-UniRule"/>
</dbReference>
<dbReference type="GO" id="GO:0000287">
    <property type="term" value="F:magnesium ion binding"/>
    <property type="evidence" value="ECO:0007669"/>
    <property type="project" value="UniProtKB-UniRule"/>
</dbReference>
<dbReference type="GO" id="GO:0009228">
    <property type="term" value="P:thiamine biosynthetic process"/>
    <property type="evidence" value="ECO:0007669"/>
    <property type="project" value="UniProtKB-KW"/>
</dbReference>
<dbReference type="GO" id="GO:0009229">
    <property type="term" value="P:thiamine diphosphate biosynthetic process"/>
    <property type="evidence" value="ECO:0007669"/>
    <property type="project" value="UniProtKB-UniRule"/>
</dbReference>
<dbReference type="CDD" id="cd01170">
    <property type="entry name" value="THZ_kinase"/>
    <property type="match status" value="1"/>
</dbReference>
<dbReference type="FunFam" id="3.40.1190.20:FF:000027">
    <property type="entry name" value="Hydroxyethylthiazole kinase"/>
    <property type="match status" value="1"/>
</dbReference>
<dbReference type="Gene3D" id="3.40.1190.20">
    <property type="match status" value="1"/>
</dbReference>
<dbReference type="HAMAP" id="MF_00228">
    <property type="entry name" value="Thz_kinase"/>
    <property type="match status" value="1"/>
</dbReference>
<dbReference type="InterPro" id="IPR000417">
    <property type="entry name" value="Hyethyz_kinase"/>
</dbReference>
<dbReference type="InterPro" id="IPR029056">
    <property type="entry name" value="Ribokinase-like"/>
</dbReference>
<dbReference type="NCBIfam" id="NF006830">
    <property type="entry name" value="PRK09355.1"/>
    <property type="match status" value="1"/>
</dbReference>
<dbReference type="NCBIfam" id="TIGR00694">
    <property type="entry name" value="thiM"/>
    <property type="match status" value="1"/>
</dbReference>
<dbReference type="Pfam" id="PF02110">
    <property type="entry name" value="HK"/>
    <property type="match status" value="1"/>
</dbReference>
<dbReference type="PIRSF" id="PIRSF000513">
    <property type="entry name" value="Thz_kinase"/>
    <property type="match status" value="1"/>
</dbReference>
<dbReference type="PRINTS" id="PR01099">
    <property type="entry name" value="HYETHTZKNASE"/>
</dbReference>
<dbReference type="SUPFAM" id="SSF53613">
    <property type="entry name" value="Ribokinase-like"/>
    <property type="match status" value="1"/>
</dbReference>
<proteinExistence type="inferred from homology"/>
<protein>
    <recommendedName>
        <fullName evidence="1">Hydroxyethylthiazole kinase</fullName>
        <ecNumber evidence="1">2.7.1.50</ecNumber>
    </recommendedName>
    <alternativeName>
        <fullName evidence="1">4-methyl-5-beta-hydroxyethylthiazole kinase</fullName>
        <shortName evidence="1">TH kinase</shortName>
        <shortName evidence="1">Thz kinase</shortName>
    </alternativeName>
</protein>
<accession>Q81IG9</accession>
<evidence type="ECO:0000255" key="1">
    <source>
        <dbReference type="HAMAP-Rule" id="MF_00228"/>
    </source>
</evidence>
<reference key="1">
    <citation type="journal article" date="2003" name="Nature">
        <title>Genome sequence of Bacillus cereus and comparative analysis with Bacillus anthracis.</title>
        <authorList>
            <person name="Ivanova N."/>
            <person name="Sorokin A."/>
            <person name="Anderson I."/>
            <person name="Galleron N."/>
            <person name="Candelon B."/>
            <person name="Kapatral V."/>
            <person name="Bhattacharyya A."/>
            <person name="Reznik G."/>
            <person name="Mikhailova N."/>
            <person name="Lapidus A."/>
            <person name="Chu L."/>
            <person name="Mazur M."/>
            <person name="Goltsman E."/>
            <person name="Larsen N."/>
            <person name="D'Souza M."/>
            <person name="Walunas T."/>
            <person name="Grechkin Y."/>
            <person name="Pusch G."/>
            <person name="Haselkorn R."/>
            <person name="Fonstein M."/>
            <person name="Ehrlich S.D."/>
            <person name="Overbeek R."/>
            <person name="Kyrpides N.C."/>
        </authorList>
    </citation>
    <scope>NUCLEOTIDE SEQUENCE [LARGE SCALE GENOMIC DNA]</scope>
    <source>
        <strain>ATCC 14579 / DSM 31 / CCUG 7414 / JCM 2152 / NBRC 15305 / NCIMB 9373 / NCTC 2599 / NRRL B-3711</strain>
    </source>
</reference>
<name>THIM_BACCR</name>
<organism>
    <name type="scientific">Bacillus cereus (strain ATCC 14579 / DSM 31 / CCUG 7414 / JCM 2152 / NBRC 15305 / NCIMB 9373 / NCTC 2599 / NRRL B-3711)</name>
    <dbReference type="NCBI Taxonomy" id="226900"/>
    <lineage>
        <taxon>Bacteria</taxon>
        <taxon>Bacillati</taxon>
        <taxon>Bacillota</taxon>
        <taxon>Bacilli</taxon>
        <taxon>Bacillales</taxon>
        <taxon>Bacillaceae</taxon>
        <taxon>Bacillus</taxon>
        <taxon>Bacillus cereus group</taxon>
    </lineage>
</organism>
<comment type="function">
    <text evidence="1">Catalyzes the phosphorylation of the hydroxyl group of 4-methyl-5-beta-hydroxyethylthiazole (THZ).</text>
</comment>
<comment type="catalytic activity">
    <reaction evidence="1">
        <text>5-(2-hydroxyethyl)-4-methylthiazole + ATP = 4-methyl-5-(2-phosphooxyethyl)-thiazole + ADP + H(+)</text>
        <dbReference type="Rhea" id="RHEA:24212"/>
        <dbReference type="ChEBI" id="CHEBI:15378"/>
        <dbReference type="ChEBI" id="CHEBI:17957"/>
        <dbReference type="ChEBI" id="CHEBI:30616"/>
        <dbReference type="ChEBI" id="CHEBI:58296"/>
        <dbReference type="ChEBI" id="CHEBI:456216"/>
        <dbReference type="EC" id="2.7.1.50"/>
    </reaction>
</comment>
<comment type="cofactor">
    <cofactor evidence="1">
        <name>Mg(2+)</name>
        <dbReference type="ChEBI" id="CHEBI:18420"/>
    </cofactor>
</comment>
<comment type="pathway">
    <text evidence="1">Cofactor biosynthesis; thiamine diphosphate biosynthesis; 4-methyl-5-(2-phosphoethyl)-thiazole from 5-(2-hydroxyethyl)-4-methylthiazole: step 1/1.</text>
</comment>
<comment type="similarity">
    <text evidence="1">Belongs to the Thz kinase family.</text>
</comment>
<keyword id="KW-0067">ATP-binding</keyword>
<keyword id="KW-0418">Kinase</keyword>
<keyword id="KW-0460">Magnesium</keyword>
<keyword id="KW-0479">Metal-binding</keyword>
<keyword id="KW-0547">Nucleotide-binding</keyword>
<keyword id="KW-1185">Reference proteome</keyword>
<keyword id="KW-0784">Thiamine biosynthesis</keyword>
<keyword id="KW-0808">Transferase</keyword>
<sequence>MNMKEISKVVDLVRESNPLVHNITNVVVTNFTANGLLALGASPVMAYAKEEVAEMASIAGALVLNMGTLRPEEVEAMLLAGKSANVNNVPVLFDPVGAGATSYRTEVARHIPAEIELASIRGNAAEIANVINERWEIKGVDAGTGNGNVVSIARQAADELNTVAVITGKEDVVTDGERTIVIRNGHPILTKVTGTGCLLTSVIGAFVAVEKDYVKAAVAALTFYGVASELAAAKTVEKGPGSFQIEFLNQLANTTSSDIEKYGKIEELE</sequence>
<gene>
    <name evidence="1" type="primary">thiM</name>
    <name type="ordered locus">BC_0419</name>
</gene>
<feature type="chain" id="PRO_0000156925" description="Hydroxyethylthiazole kinase">
    <location>
        <begin position="1"/>
        <end position="269"/>
    </location>
</feature>
<feature type="binding site" evidence="1">
    <location>
        <position position="45"/>
    </location>
    <ligand>
        <name>substrate</name>
    </ligand>
</feature>
<feature type="binding site" evidence="1">
    <location>
        <position position="121"/>
    </location>
    <ligand>
        <name>ATP</name>
        <dbReference type="ChEBI" id="CHEBI:30616"/>
    </ligand>
</feature>
<feature type="binding site" evidence="1">
    <location>
        <position position="167"/>
    </location>
    <ligand>
        <name>ATP</name>
        <dbReference type="ChEBI" id="CHEBI:30616"/>
    </ligand>
</feature>
<feature type="binding site" evidence="1">
    <location>
        <position position="194"/>
    </location>
    <ligand>
        <name>substrate</name>
    </ligand>
</feature>